<gene>
    <name evidence="1" type="primary">argC1</name>
    <name type="ordered locus">alr3537</name>
</gene>
<reference key="1">
    <citation type="journal article" date="2001" name="DNA Res.">
        <title>Complete genomic sequence of the filamentous nitrogen-fixing cyanobacterium Anabaena sp. strain PCC 7120.</title>
        <authorList>
            <person name="Kaneko T."/>
            <person name="Nakamura Y."/>
            <person name="Wolk C.P."/>
            <person name="Kuritz T."/>
            <person name="Sasamoto S."/>
            <person name="Watanabe A."/>
            <person name="Iriguchi M."/>
            <person name="Ishikawa A."/>
            <person name="Kawashima K."/>
            <person name="Kimura T."/>
            <person name="Kishida Y."/>
            <person name="Kohara M."/>
            <person name="Matsumoto M."/>
            <person name="Matsuno A."/>
            <person name="Muraki A."/>
            <person name="Nakazaki N."/>
            <person name="Shimpo S."/>
            <person name="Sugimoto M."/>
            <person name="Takazawa M."/>
            <person name="Yamada M."/>
            <person name="Yasuda M."/>
            <person name="Tabata S."/>
        </authorList>
    </citation>
    <scope>NUCLEOTIDE SEQUENCE [LARGE SCALE GENOMIC DNA]</scope>
    <source>
        <strain>PCC 7120 / SAG 25.82 / UTEX 2576</strain>
    </source>
</reference>
<sequence>MGNFGRVPVGIVGASGYGGVQLVRLLMDHPEIELVYLGGESSVGKSFASLYPHLAHAVKLSIEEVDPEVIARRCEVVFLSMPNGLACQIVPTLLEKGCKVLDLSADYRFRNLTTYTTWYGVERSDRTTADTAIYGLPELYRDRISEAQLVGCPGSYPTASLLALSPLLKQGLIVPETAIVDAKSGTSGGGREAKTYLLLAEADNSLAPYSVVRHRHTPEIEQICSDLAGHEVTVQFTPHLVPIVRGILATVYATLRDPGLVGDDLTTIYTAFYRNSPWVKVCESGIYPQTKWAAGSNLCYIGVEVDPRTGRVIVMSVIDNLIKGQAGQAIQCLNIMMGWDETLGLPKMGFYP</sequence>
<organism>
    <name type="scientific">Nostoc sp. (strain PCC 7120 / SAG 25.82 / UTEX 2576)</name>
    <dbReference type="NCBI Taxonomy" id="103690"/>
    <lineage>
        <taxon>Bacteria</taxon>
        <taxon>Bacillati</taxon>
        <taxon>Cyanobacteriota</taxon>
        <taxon>Cyanophyceae</taxon>
        <taxon>Nostocales</taxon>
        <taxon>Nostocaceae</taxon>
        <taxon>Nostoc</taxon>
    </lineage>
</organism>
<proteinExistence type="inferred from homology"/>
<comment type="function">
    <text evidence="1">Catalyzes the NADPH-dependent reduction of N-acetyl-5-glutamyl phosphate to yield N-acetyl-L-glutamate 5-semialdehyde.</text>
</comment>
<comment type="catalytic activity">
    <reaction evidence="1">
        <text>N-acetyl-L-glutamate 5-semialdehyde + phosphate + NADP(+) = N-acetyl-L-glutamyl 5-phosphate + NADPH + H(+)</text>
        <dbReference type="Rhea" id="RHEA:21588"/>
        <dbReference type="ChEBI" id="CHEBI:15378"/>
        <dbReference type="ChEBI" id="CHEBI:29123"/>
        <dbReference type="ChEBI" id="CHEBI:43474"/>
        <dbReference type="ChEBI" id="CHEBI:57783"/>
        <dbReference type="ChEBI" id="CHEBI:57936"/>
        <dbReference type="ChEBI" id="CHEBI:58349"/>
        <dbReference type="EC" id="1.2.1.38"/>
    </reaction>
</comment>
<comment type="pathway">
    <text evidence="1">Amino-acid biosynthesis; L-arginine biosynthesis; N(2)-acetyl-L-ornithine from L-glutamate: step 3/4.</text>
</comment>
<comment type="subcellular location">
    <subcellularLocation>
        <location evidence="1">Cytoplasm</location>
    </subcellularLocation>
</comment>
<comment type="similarity">
    <text evidence="1">Belongs to the NAGSA dehydrogenase family. Type 1 subfamily.</text>
</comment>
<comment type="caution">
    <text evidence="2">Ser-155 is present instead of the conserved Cys which is expected to be an active site residue.</text>
</comment>
<protein>
    <recommendedName>
        <fullName evidence="1">N-acetyl-gamma-glutamyl-phosphate reductase 1</fullName>
        <shortName evidence="1">AGPR 1</shortName>
        <ecNumber evidence="1">1.2.1.38</ecNumber>
    </recommendedName>
    <alternativeName>
        <fullName evidence="1">N-acetyl-glutamate semialdehyde dehydrogenase 1</fullName>
        <shortName evidence="1">NAGSA dehydrogenase 1</shortName>
    </alternativeName>
</protein>
<evidence type="ECO:0000255" key="1">
    <source>
        <dbReference type="HAMAP-Rule" id="MF_00150"/>
    </source>
</evidence>
<evidence type="ECO:0000305" key="2"/>
<dbReference type="EC" id="1.2.1.38" evidence="1"/>
<dbReference type="EMBL" id="BA000019">
    <property type="protein sequence ID" value="BAB75236.1"/>
    <property type="molecule type" value="Genomic_DNA"/>
</dbReference>
<dbReference type="PIR" id="AB2248">
    <property type="entry name" value="AB2248"/>
</dbReference>
<dbReference type="SMR" id="Q8YRB1"/>
<dbReference type="STRING" id="103690.gene:10495578"/>
<dbReference type="KEGG" id="ana:alr3537"/>
<dbReference type="eggNOG" id="COG0002">
    <property type="taxonomic scope" value="Bacteria"/>
</dbReference>
<dbReference type="OrthoDB" id="9801289at2"/>
<dbReference type="UniPathway" id="UPA00068">
    <property type="reaction ID" value="UER00108"/>
</dbReference>
<dbReference type="Proteomes" id="UP000002483">
    <property type="component" value="Chromosome"/>
</dbReference>
<dbReference type="GO" id="GO:0005737">
    <property type="term" value="C:cytoplasm"/>
    <property type="evidence" value="ECO:0007669"/>
    <property type="project" value="UniProtKB-SubCell"/>
</dbReference>
<dbReference type="GO" id="GO:0003942">
    <property type="term" value="F:N-acetyl-gamma-glutamyl-phosphate reductase activity"/>
    <property type="evidence" value="ECO:0007669"/>
    <property type="project" value="UniProtKB-UniRule"/>
</dbReference>
<dbReference type="GO" id="GO:0051287">
    <property type="term" value="F:NAD binding"/>
    <property type="evidence" value="ECO:0007669"/>
    <property type="project" value="InterPro"/>
</dbReference>
<dbReference type="GO" id="GO:0070401">
    <property type="term" value="F:NADP+ binding"/>
    <property type="evidence" value="ECO:0007669"/>
    <property type="project" value="InterPro"/>
</dbReference>
<dbReference type="GO" id="GO:0006526">
    <property type="term" value="P:L-arginine biosynthetic process"/>
    <property type="evidence" value="ECO:0007669"/>
    <property type="project" value="UniProtKB-UniRule"/>
</dbReference>
<dbReference type="CDD" id="cd23934">
    <property type="entry name" value="AGPR_1_C"/>
    <property type="match status" value="1"/>
</dbReference>
<dbReference type="CDD" id="cd17895">
    <property type="entry name" value="AGPR_1_N"/>
    <property type="match status" value="1"/>
</dbReference>
<dbReference type="FunFam" id="3.30.360.10:FF:000014">
    <property type="entry name" value="N-acetyl-gamma-glutamyl-phosphate reductase"/>
    <property type="match status" value="1"/>
</dbReference>
<dbReference type="Gene3D" id="3.30.360.10">
    <property type="entry name" value="Dihydrodipicolinate Reductase, domain 2"/>
    <property type="match status" value="1"/>
</dbReference>
<dbReference type="Gene3D" id="3.40.50.720">
    <property type="entry name" value="NAD(P)-binding Rossmann-like Domain"/>
    <property type="match status" value="1"/>
</dbReference>
<dbReference type="HAMAP" id="MF_00150">
    <property type="entry name" value="ArgC_type1"/>
    <property type="match status" value="1"/>
</dbReference>
<dbReference type="InterPro" id="IPR000706">
    <property type="entry name" value="AGPR_type-1"/>
</dbReference>
<dbReference type="InterPro" id="IPR036291">
    <property type="entry name" value="NAD(P)-bd_dom_sf"/>
</dbReference>
<dbReference type="InterPro" id="IPR050085">
    <property type="entry name" value="NAGSA_dehydrogenase"/>
</dbReference>
<dbReference type="InterPro" id="IPR000534">
    <property type="entry name" value="Semialdehyde_DH_NAD-bd"/>
</dbReference>
<dbReference type="NCBIfam" id="TIGR01850">
    <property type="entry name" value="argC"/>
    <property type="match status" value="1"/>
</dbReference>
<dbReference type="PANTHER" id="PTHR32338:SF10">
    <property type="entry name" value="N-ACETYL-GAMMA-GLUTAMYL-PHOSPHATE REDUCTASE, CHLOROPLASTIC-RELATED"/>
    <property type="match status" value="1"/>
</dbReference>
<dbReference type="PANTHER" id="PTHR32338">
    <property type="entry name" value="N-ACETYL-GAMMA-GLUTAMYL-PHOSPHATE REDUCTASE, CHLOROPLASTIC-RELATED-RELATED"/>
    <property type="match status" value="1"/>
</dbReference>
<dbReference type="Pfam" id="PF01118">
    <property type="entry name" value="Semialdhyde_dh"/>
    <property type="match status" value="1"/>
</dbReference>
<dbReference type="Pfam" id="PF22698">
    <property type="entry name" value="Semialdhyde_dhC_1"/>
    <property type="match status" value="1"/>
</dbReference>
<dbReference type="SMART" id="SM00859">
    <property type="entry name" value="Semialdhyde_dh"/>
    <property type="match status" value="1"/>
</dbReference>
<dbReference type="SUPFAM" id="SSF55347">
    <property type="entry name" value="Glyceraldehyde-3-phosphate dehydrogenase-like, C-terminal domain"/>
    <property type="match status" value="1"/>
</dbReference>
<dbReference type="SUPFAM" id="SSF51735">
    <property type="entry name" value="NAD(P)-binding Rossmann-fold domains"/>
    <property type="match status" value="1"/>
</dbReference>
<accession>Q8YRB1</accession>
<feature type="chain" id="PRO_0000112374" description="N-acetyl-gamma-glutamyl-phosphate reductase 1">
    <location>
        <begin position="1"/>
        <end position="352"/>
    </location>
</feature>
<keyword id="KW-0028">Amino-acid biosynthesis</keyword>
<keyword id="KW-0055">Arginine biosynthesis</keyword>
<keyword id="KW-0963">Cytoplasm</keyword>
<keyword id="KW-0521">NADP</keyword>
<keyword id="KW-0560">Oxidoreductase</keyword>
<keyword id="KW-1185">Reference proteome</keyword>
<name>ARGC1_NOSS1</name>